<proteinExistence type="inferred from homology"/>
<sequence>MANDRVPMTPAGEQALRAELDKLKKIERPAIIEAIAEARDHGDLKENAEYHAARERQGIIEGRIKDIESKLSNAQVIDVTKIQANGMVIFGATVTIMNVDTEEETTYKIVGEDEADIDNQKISVVAPLARALIKKEEGDEITLDTPKGKVTYEIVAVEYK</sequence>
<comment type="function">
    <text evidence="1">Necessary for efficient RNA polymerase transcription elongation past template-encoded arresting sites. The arresting sites in DNA have the property of trapping a certain fraction of elongating RNA polymerases that pass through, resulting in locked ternary complexes. Cleavage of the nascent transcript by cleavage factors such as GreA or GreB allows the resumption of elongation from the new 3'terminus. GreA releases sequences of 2 to 3 nucleotides.</text>
</comment>
<comment type="similarity">
    <text evidence="1">Belongs to the GreA/GreB family.</text>
</comment>
<evidence type="ECO:0000255" key="1">
    <source>
        <dbReference type="HAMAP-Rule" id="MF_00105"/>
    </source>
</evidence>
<accession>A0Q5P2</accession>
<reference key="1">
    <citation type="journal article" date="2007" name="Genome Biol.">
        <title>Comparison of Francisella tularensis genomes reveals evolutionary events associated with the emergence of human pathogenic strains.</title>
        <authorList>
            <person name="Rohmer L."/>
            <person name="Fong C."/>
            <person name="Abmayr S."/>
            <person name="Wasnick M."/>
            <person name="Larson Freeman T.J."/>
            <person name="Radey M."/>
            <person name="Guina T."/>
            <person name="Svensson K."/>
            <person name="Hayden H.S."/>
            <person name="Jacobs M."/>
            <person name="Gallagher L.A."/>
            <person name="Manoil C."/>
            <person name="Ernst R.K."/>
            <person name="Drees B."/>
            <person name="Buckley D."/>
            <person name="Haugen E."/>
            <person name="Bovee D."/>
            <person name="Zhou Y."/>
            <person name="Chang J."/>
            <person name="Levy R."/>
            <person name="Lim R."/>
            <person name="Gillett W."/>
            <person name="Guenthener D."/>
            <person name="Kang A."/>
            <person name="Shaffer S.A."/>
            <person name="Taylor G."/>
            <person name="Chen J."/>
            <person name="Gallis B."/>
            <person name="D'Argenio D.A."/>
            <person name="Forsman M."/>
            <person name="Olson M.V."/>
            <person name="Goodlett D.R."/>
            <person name="Kaul R."/>
            <person name="Miller S.I."/>
            <person name="Brittnacher M.J."/>
        </authorList>
    </citation>
    <scope>NUCLEOTIDE SEQUENCE [LARGE SCALE GENOMIC DNA]</scope>
    <source>
        <strain>U112</strain>
    </source>
</reference>
<gene>
    <name evidence="1" type="primary">greA</name>
    <name type="ordered locus">FTN_0665</name>
</gene>
<protein>
    <recommendedName>
        <fullName evidence="1">Transcription elongation factor GreA</fullName>
    </recommendedName>
    <alternativeName>
        <fullName evidence="1">Transcript cleavage factor GreA</fullName>
    </alternativeName>
</protein>
<name>GREA_FRATN</name>
<organism>
    <name type="scientific">Francisella tularensis subsp. novicida (strain U112)</name>
    <dbReference type="NCBI Taxonomy" id="401614"/>
    <lineage>
        <taxon>Bacteria</taxon>
        <taxon>Pseudomonadati</taxon>
        <taxon>Pseudomonadota</taxon>
        <taxon>Gammaproteobacteria</taxon>
        <taxon>Thiotrichales</taxon>
        <taxon>Francisellaceae</taxon>
        <taxon>Francisella</taxon>
    </lineage>
</organism>
<keyword id="KW-0238">DNA-binding</keyword>
<keyword id="KW-0804">Transcription</keyword>
<keyword id="KW-0805">Transcription regulation</keyword>
<dbReference type="EMBL" id="CP000439">
    <property type="protein sequence ID" value="ABK89557.1"/>
    <property type="molecule type" value="Genomic_DNA"/>
</dbReference>
<dbReference type="RefSeq" id="WP_003016773.1">
    <property type="nucleotide sequence ID" value="NZ_CP009633.1"/>
</dbReference>
<dbReference type="SMR" id="A0Q5P2"/>
<dbReference type="KEGG" id="ftn:FTN_0665"/>
<dbReference type="KEGG" id="ftx:AW25_1360"/>
<dbReference type="BioCyc" id="FTUL401614:G1G75-691-MONOMER"/>
<dbReference type="PHI-base" id="PHI:8069"/>
<dbReference type="Proteomes" id="UP000000762">
    <property type="component" value="Chromosome"/>
</dbReference>
<dbReference type="GO" id="GO:0003677">
    <property type="term" value="F:DNA binding"/>
    <property type="evidence" value="ECO:0007669"/>
    <property type="project" value="UniProtKB-UniRule"/>
</dbReference>
<dbReference type="GO" id="GO:0070063">
    <property type="term" value="F:RNA polymerase binding"/>
    <property type="evidence" value="ECO:0007669"/>
    <property type="project" value="InterPro"/>
</dbReference>
<dbReference type="GO" id="GO:0006354">
    <property type="term" value="P:DNA-templated transcription elongation"/>
    <property type="evidence" value="ECO:0007669"/>
    <property type="project" value="TreeGrafter"/>
</dbReference>
<dbReference type="GO" id="GO:0032784">
    <property type="term" value="P:regulation of DNA-templated transcription elongation"/>
    <property type="evidence" value="ECO:0007669"/>
    <property type="project" value="UniProtKB-UniRule"/>
</dbReference>
<dbReference type="FunFam" id="1.10.287.180:FF:000001">
    <property type="entry name" value="Transcription elongation factor GreA"/>
    <property type="match status" value="1"/>
</dbReference>
<dbReference type="FunFam" id="3.10.50.30:FF:000001">
    <property type="entry name" value="Transcription elongation factor GreA"/>
    <property type="match status" value="1"/>
</dbReference>
<dbReference type="Gene3D" id="3.10.50.30">
    <property type="entry name" value="Transcription elongation factor, GreA/GreB, C-terminal domain"/>
    <property type="match status" value="1"/>
</dbReference>
<dbReference type="Gene3D" id="1.10.287.180">
    <property type="entry name" value="Transcription elongation factor, GreA/GreB, N-terminal domain"/>
    <property type="match status" value="1"/>
</dbReference>
<dbReference type="HAMAP" id="MF_00105">
    <property type="entry name" value="GreA_GreB"/>
    <property type="match status" value="1"/>
</dbReference>
<dbReference type="InterPro" id="IPR036953">
    <property type="entry name" value="GreA/GreB_C_sf"/>
</dbReference>
<dbReference type="InterPro" id="IPR018151">
    <property type="entry name" value="TF_GreA/GreB_CS"/>
</dbReference>
<dbReference type="InterPro" id="IPR006359">
    <property type="entry name" value="Tscrpt_elong_fac_GreA"/>
</dbReference>
<dbReference type="InterPro" id="IPR028624">
    <property type="entry name" value="Tscrpt_elong_fac_GreA/B"/>
</dbReference>
<dbReference type="InterPro" id="IPR001437">
    <property type="entry name" value="Tscrpt_elong_fac_GreA/B_C"/>
</dbReference>
<dbReference type="InterPro" id="IPR023459">
    <property type="entry name" value="Tscrpt_elong_fac_GreA/B_fam"/>
</dbReference>
<dbReference type="InterPro" id="IPR022691">
    <property type="entry name" value="Tscrpt_elong_fac_GreA/B_N"/>
</dbReference>
<dbReference type="InterPro" id="IPR036805">
    <property type="entry name" value="Tscrpt_elong_fac_GreA/B_N_sf"/>
</dbReference>
<dbReference type="NCBIfam" id="TIGR01462">
    <property type="entry name" value="greA"/>
    <property type="match status" value="1"/>
</dbReference>
<dbReference type="NCBIfam" id="NF001261">
    <property type="entry name" value="PRK00226.1-2"/>
    <property type="match status" value="1"/>
</dbReference>
<dbReference type="NCBIfam" id="NF001263">
    <property type="entry name" value="PRK00226.1-4"/>
    <property type="match status" value="1"/>
</dbReference>
<dbReference type="NCBIfam" id="NF001264">
    <property type="entry name" value="PRK00226.1-5"/>
    <property type="match status" value="1"/>
</dbReference>
<dbReference type="PANTHER" id="PTHR30437">
    <property type="entry name" value="TRANSCRIPTION ELONGATION FACTOR GREA"/>
    <property type="match status" value="1"/>
</dbReference>
<dbReference type="PANTHER" id="PTHR30437:SF4">
    <property type="entry name" value="TRANSCRIPTION ELONGATION FACTOR GREA"/>
    <property type="match status" value="1"/>
</dbReference>
<dbReference type="Pfam" id="PF01272">
    <property type="entry name" value="GreA_GreB"/>
    <property type="match status" value="1"/>
</dbReference>
<dbReference type="Pfam" id="PF03449">
    <property type="entry name" value="GreA_GreB_N"/>
    <property type="match status" value="1"/>
</dbReference>
<dbReference type="PIRSF" id="PIRSF006092">
    <property type="entry name" value="GreA_GreB"/>
    <property type="match status" value="1"/>
</dbReference>
<dbReference type="SUPFAM" id="SSF54534">
    <property type="entry name" value="FKBP-like"/>
    <property type="match status" value="1"/>
</dbReference>
<dbReference type="SUPFAM" id="SSF46557">
    <property type="entry name" value="GreA transcript cleavage protein, N-terminal domain"/>
    <property type="match status" value="1"/>
</dbReference>
<dbReference type="PROSITE" id="PS00829">
    <property type="entry name" value="GREAB_1"/>
    <property type="match status" value="1"/>
</dbReference>
<feature type="chain" id="PRO_1000202856" description="Transcription elongation factor GreA">
    <location>
        <begin position="1"/>
        <end position="160"/>
    </location>
</feature>